<organism>
    <name type="scientific">Human immunodeficiency virus type 2 subtype A (isolate D194)</name>
    <name type="common">HIV-2</name>
    <dbReference type="NCBI Taxonomy" id="11713"/>
    <lineage>
        <taxon>Viruses</taxon>
        <taxon>Riboviria</taxon>
        <taxon>Pararnavirae</taxon>
        <taxon>Artverviricota</taxon>
        <taxon>Revtraviricetes</taxon>
        <taxon>Ortervirales</taxon>
        <taxon>Retroviridae</taxon>
        <taxon>Orthoretrovirinae</taxon>
        <taxon>Lentivirus</taxon>
        <taxon>Human immunodeficiency virus 2</taxon>
    </lineage>
</organism>
<sequence length="130" mass="14598">METPLKEPESSLESYNEPSSCTSERDVTAQERAKQGEELLAQLHRPLEACTNSCYCKQCSYHCQLCFLKKGLGIWYARQGRRRRTPRKTKTHPPPASDKSISTRTGDSQPTKKQKKTPETTVVSACGLGH</sequence>
<organismHost>
    <name type="scientific">Homo sapiens</name>
    <name type="common">Human</name>
    <dbReference type="NCBI Taxonomy" id="9606"/>
</organismHost>
<evidence type="ECO:0000250" key="1"/>
<evidence type="ECO:0000250" key="2">
    <source>
        <dbReference type="UniProtKB" id="P04608"/>
    </source>
</evidence>
<evidence type="ECO:0000256" key="3">
    <source>
        <dbReference type="SAM" id="MobiDB-lite"/>
    </source>
</evidence>
<evidence type="ECO:0000305" key="4"/>
<reference key="1">
    <citation type="journal article" date="1989" name="Proc. Natl. Acad. Sci. U.S.A.">
        <title>Molecular cloning of two west African human immunodeficiency virus type 2 isolates that replicate well in macrophages: a Gambian isolate, from a patient with neurologic acquired immunodeficiency syndrome, and a highly divergent Ghanian isolate.</title>
        <authorList>
            <person name="Kuehnel H."/>
            <person name="von Briesen H."/>
            <person name="Dietrich U."/>
            <person name="Adamski M."/>
            <person name="Mix D."/>
            <person name="Biesert L."/>
            <person name="Kreutz R."/>
            <person name="Immelmann A."/>
            <person name="Henco K."/>
            <person name="Meichsner C."/>
            <person name="Andreesen R."/>
            <person name="Gelderblom H."/>
            <person name="Ruebsamen-Waigmann H."/>
        </authorList>
    </citation>
    <scope>NUCLEOTIDE SEQUENCE [GENOMIC DNA]</scope>
</reference>
<reference key="2">
    <citation type="journal article" date="1990" name="Nucleic Acids Res.">
        <title>Nucleotide sequence of HIV-2D194, an isolate from a Gambian case of 'neuro-AIDS', which showed excellent growth in macrophages.</title>
        <authorList>
            <person name="Kuehnel H."/>
            <person name="Kreutz R."/>
            <person name="Ruebsamen-Waigmann H."/>
        </authorList>
    </citation>
    <scope>NUCLEOTIDE SEQUENCE [GENOMIC DNA]</scope>
</reference>
<reference key="3">
    <citation type="journal article" date="2005" name="Microbes Infect.">
        <title>Decoding Tat: the biology of HIV Tat posttranslational modifications.</title>
        <authorList>
            <person name="Hetzer C."/>
            <person name="Dormeyer W."/>
            <person name="Schnolzer M."/>
            <person name="Ott M."/>
        </authorList>
    </citation>
    <scope>REVIEW</scope>
    <scope>ALTERNATIVE SPLICING</scope>
</reference>
<proteinExistence type="inferred from homology"/>
<keyword id="KW-0010">Activator</keyword>
<keyword id="KW-0014">AIDS</keyword>
<keyword id="KW-0025">Alternative splicing</keyword>
<keyword id="KW-1048">Host nucleus</keyword>
<keyword id="KW-0945">Host-virus interaction</keyword>
<keyword id="KW-0597">Phosphoprotein</keyword>
<keyword id="KW-0694">RNA-binding</keyword>
<keyword id="KW-0804">Transcription</keyword>
<keyword id="KW-0805">Transcription regulation</keyword>
<protein>
    <recommendedName>
        <fullName>Protein Tat</fullName>
    </recommendedName>
    <alternativeName>
        <fullName>Transactivating regulatory protein</fullName>
    </alternativeName>
</protein>
<name>TAT_HV2D1</name>
<dbReference type="EMBL" id="J04542">
    <property type="protein sequence ID" value="AAA76845.1"/>
    <property type="molecule type" value="Genomic_DNA"/>
</dbReference>
<dbReference type="EMBL" id="X52223">
    <property type="protein sequence ID" value="CAA36469.1"/>
    <property type="molecule type" value="Genomic_DNA"/>
</dbReference>
<dbReference type="PIR" id="S12157">
    <property type="entry name" value="S12157"/>
</dbReference>
<dbReference type="Proteomes" id="UP000007422">
    <property type="component" value="Segment"/>
</dbReference>
<dbReference type="GO" id="GO:0044196">
    <property type="term" value="C:host cell nucleolus"/>
    <property type="evidence" value="ECO:0007669"/>
    <property type="project" value="UniProtKB-SubCell"/>
</dbReference>
<dbReference type="GO" id="GO:0003723">
    <property type="term" value="F:RNA binding"/>
    <property type="evidence" value="ECO:0007669"/>
    <property type="project" value="UniProtKB-KW"/>
</dbReference>
<dbReference type="GO" id="GO:0001070">
    <property type="term" value="F:RNA-binding transcription regulator activity"/>
    <property type="evidence" value="ECO:0007669"/>
    <property type="project" value="InterPro"/>
</dbReference>
<dbReference type="GO" id="GO:0050434">
    <property type="term" value="P:positive regulation of viral transcription"/>
    <property type="evidence" value="ECO:0007669"/>
    <property type="project" value="InterPro"/>
</dbReference>
<dbReference type="Gene3D" id="4.10.20.10">
    <property type="entry name" value="Tat domain"/>
    <property type="match status" value="1"/>
</dbReference>
<dbReference type="InterPro" id="IPR001831">
    <property type="entry name" value="IV_Tat"/>
</dbReference>
<dbReference type="InterPro" id="IPR036963">
    <property type="entry name" value="Tat_dom_sf"/>
</dbReference>
<dbReference type="Pfam" id="PF00539">
    <property type="entry name" value="Tat"/>
    <property type="match status" value="1"/>
</dbReference>
<dbReference type="PRINTS" id="PR00055">
    <property type="entry name" value="HIVTATDOMAIN"/>
</dbReference>
<comment type="function">
    <text evidence="2">Transcriptional activator that increases RNA Pol II processivity, thereby increasing the level of full-length viral transcripts. Recognizes a hairpin structure at the 5'-LTR of the nascent viral mRNAs referred to as the transactivation responsive RNA element (TAR) and recruits the cyclin T1-CDK9 complex (P-TEFb complex) that will in turn hyperphosphorylate the RNA polymerase II to allow efficient elongation. The CDK9 component of P-TEFb and other Tat-activated kinases hyperphosphorylate the C-terminus of RNA Pol II that becomes stabilized and much more processive.</text>
</comment>
<comment type="function">
    <text evidence="1">Extracellular circulating Tat can be endocytosed by surrounding uninfected cells via the binding to several surface receptors. Endosomal low pH allows Tat to cross the endosome membrane to enter the cytosol and eventually further translocate into the nucleus, thereby inducing severe cell dysfunctions ranging from cell activation to cell death. Through (By similarity).</text>
</comment>
<comment type="subunit">
    <text evidence="1">Binds human CCNT1. Also binds to CCNT2, but the resulting complex is unable to bind to TAR RNA. May participate in the formation of a complex composed at least of Tat, P-TEFb, TAR RNA, RNA Pol II (By similarity).</text>
</comment>
<comment type="subcellular location">
    <subcellularLocation>
        <location evidence="1">Host nucleus</location>
        <location evidence="1">Host nucleolus</location>
    </subcellularLocation>
</comment>
<comment type="alternative products">
    <event type="alternative splicing"/>
    <isoform>
        <id>P17759-1</id>
        <name>Long</name>
        <sequence type="displayed"/>
    </isoform>
    <isoform>
        <id>P17759-2</id>
        <name>Short</name>
        <sequence type="described" ref="VSP_022439"/>
    </isoform>
</comment>
<comment type="domain">
    <text evidence="1">The Arg-rich RNA-binding region binds the TAR RNA. This region also mediates the nuclear localization (By similarity).</text>
</comment>
<comment type="PTM">
    <text evidence="1">The phosphorylation by CDK9 does not seem to be important for transactivation function.</text>
</comment>
<comment type="miscellaneous">
    <text>This isolate is from a Gambian case of 'neuro-AIDS'.</text>
</comment>
<comment type="miscellaneous">
    <molecule>Isoform Short</molecule>
    <text evidence="4">Expressed in the late stage of the infection cycle, when unspliced viral RNAs are exported to the cytoplasm by the viral Rev protein.</text>
</comment>
<comment type="similarity">
    <text evidence="4">Belongs to the lentiviruses Tat family.</text>
</comment>
<feature type="chain" id="PRO_0000085366" description="Protein Tat">
    <location>
        <begin position="1"/>
        <end position="130"/>
    </location>
</feature>
<feature type="region of interest" description="Disordered" evidence="3">
    <location>
        <begin position="1"/>
        <end position="33"/>
    </location>
</feature>
<feature type="region of interest" description="Cysteine-rich" evidence="1">
    <location>
        <begin position="50"/>
        <end position="66"/>
    </location>
</feature>
<feature type="region of interest" description="Core" evidence="1">
    <location>
        <begin position="67"/>
        <end position="77"/>
    </location>
</feature>
<feature type="region of interest" description="Disordered" evidence="3">
    <location>
        <begin position="78"/>
        <end position="130"/>
    </location>
</feature>
<feature type="short sequence motif" description="Nuclear localization signal, and RNA-binding (TAR)" evidence="1">
    <location>
        <begin position="78"/>
        <end position="90"/>
    </location>
</feature>
<feature type="compositionally biased region" description="Polar residues" evidence="3">
    <location>
        <begin position="11"/>
        <end position="22"/>
    </location>
</feature>
<feature type="compositionally biased region" description="Basic and acidic residues" evidence="3">
    <location>
        <begin position="23"/>
        <end position="33"/>
    </location>
</feature>
<feature type="compositionally biased region" description="Basic residues" evidence="3">
    <location>
        <begin position="79"/>
        <end position="91"/>
    </location>
</feature>
<feature type="compositionally biased region" description="Polar residues" evidence="3">
    <location>
        <begin position="99"/>
        <end position="108"/>
    </location>
</feature>
<feature type="modified residue" description="Phosphothreonine; by host CDK9" evidence="1">
    <location>
        <position position="85"/>
    </location>
</feature>
<feature type="modified residue" description="Phosphothreonine; by host CDK9" evidence="1">
    <location>
        <position position="89"/>
    </location>
</feature>
<feature type="splice variant" id="VSP_022439" description="In isoform Short." evidence="4">
    <location>
        <begin position="100"/>
        <end position="130"/>
    </location>
</feature>
<gene>
    <name type="primary">tat</name>
</gene>
<accession>P17759</accession>